<accession>Q577C7</accession>
<name>NRDI_BRUAB</name>
<organism>
    <name type="scientific">Brucella abortus biovar 1 (strain 9-941)</name>
    <dbReference type="NCBI Taxonomy" id="262698"/>
    <lineage>
        <taxon>Bacteria</taxon>
        <taxon>Pseudomonadati</taxon>
        <taxon>Pseudomonadota</taxon>
        <taxon>Alphaproteobacteria</taxon>
        <taxon>Hyphomicrobiales</taxon>
        <taxon>Brucellaceae</taxon>
        <taxon>Brucella/Ochrobactrum group</taxon>
        <taxon>Brucella</taxon>
    </lineage>
</organism>
<gene>
    <name evidence="1" type="primary">nrdI</name>
    <name type="ordered locus">BruAb2_0866</name>
</gene>
<dbReference type="EMBL" id="AE017224">
    <property type="protein sequence ID" value="AAX76257.1"/>
    <property type="molecule type" value="Genomic_DNA"/>
</dbReference>
<dbReference type="RefSeq" id="WP_002966273.1">
    <property type="nucleotide sequence ID" value="NC_006933.1"/>
</dbReference>
<dbReference type="SMR" id="Q577C7"/>
<dbReference type="EnsemblBacteria" id="AAX76257">
    <property type="protein sequence ID" value="AAX76257"/>
    <property type="gene ID" value="BruAb2_0866"/>
</dbReference>
<dbReference type="GeneID" id="97535519"/>
<dbReference type="KEGG" id="bmb:BruAb2_0866"/>
<dbReference type="HOGENOM" id="CLU_114845_0_0_5"/>
<dbReference type="Proteomes" id="UP000000540">
    <property type="component" value="Chromosome II"/>
</dbReference>
<dbReference type="GO" id="GO:0010181">
    <property type="term" value="F:FMN binding"/>
    <property type="evidence" value="ECO:0007669"/>
    <property type="project" value="InterPro"/>
</dbReference>
<dbReference type="GO" id="GO:0036211">
    <property type="term" value="P:protein modification process"/>
    <property type="evidence" value="ECO:0007669"/>
    <property type="project" value="InterPro"/>
</dbReference>
<dbReference type="Gene3D" id="3.40.50.360">
    <property type="match status" value="1"/>
</dbReference>
<dbReference type="HAMAP" id="MF_00128">
    <property type="entry name" value="NrdI"/>
    <property type="match status" value="1"/>
</dbReference>
<dbReference type="InterPro" id="IPR029039">
    <property type="entry name" value="Flavoprotein-like_sf"/>
</dbReference>
<dbReference type="InterPro" id="IPR020852">
    <property type="entry name" value="RNR_Ib_NrdI_bac"/>
</dbReference>
<dbReference type="InterPro" id="IPR004465">
    <property type="entry name" value="RNR_NrdI"/>
</dbReference>
<dbReference type="NCBIfam" id="TIGR00333">
    <property type="entry name" value="nrdI"/>
    <property type="match status" value="1"/>
</dbReference>
<dbReference type="PANTHER" id="PTHR37297">
    <property type="entry name" value="PROTEIN NRDI"/>
    <property type="match status" value="1"/>
</dbReference>
<dbReference type="PANTHER" id="PTHR37297:SF1">
    <property type="entry name" value="PROTEIN NRDI"/>
    <property type="match status" value="1"/>
</dbReference>
<dbReference type="Pfam" id="PF07972">
    <property type="entry name" value="Flavodoxin_NdrI"/>
    <property type="match status" value="1"/>
</dbReference>
<dbReference type="PIRSF" id="PIRSF005087">
    <property type="entry name" value="NrdI"/>
    <property type="match status" value="1"/>
</dbReference>
<dbReference type="SUPFAM" id="SSF52218">
    <property type="entry name" value="Flavoproteins"/>
    <property type="match status" value="1"/>
</dbReference>
<proteinExistence type="inferred from homology"/>
<feature type="chain" id="PRO_0000164308" description="Protein NrdI">
    <location>
        <begin position="1"/>
        <end position="135"/>
    </location>
</feature>
<sequence length="135" mass="14656">MSLIVYFSSRSGNTHRFVERLGVRSSRIPLEASGALQVREPFVLVTPTYGGGSTKGAVPNPVIRFLNDADNRALIRGVIAAGNSNFGEAFCIAGNIISAKCGVPYLYRFELLGTAEDVGNVRNGMEQFWTRQTQA</sequence>
<comment type="function">
    <text evidence="1">Probably involved in ribonucleotide reductase function.</text>
</comment>
<comment type="similarity">
    <text evidence="1">Belongs to the NrdI family.</text>
</comment>
<protein>
    <recommendedName>
        <fullName evidence="1">Protein NrdI</fullName>
    </recommendedName>
</protein>
<reference key="1">
    <citation type="journal article" date="2005" name="J. Bacteriol.">
        <title>Completion of the genome sequence of Brucella abortus and comparison to the highly similar genomes of Brucella melitensis and Brucella suis.</title>
        <authorList>
            <person name="Halling S.M."/>
            <person name="Peterson-Burch B.D."/>
            <person name="Bricker B.J."/>
            <person name="Zuerner R.L."/>
            <person name="Qing Z."/>
            <person name="Li L.-L."/>
            <person name="Kapur V."/>
            <person name="Alt D.P."/>
            <person name="Olsen S.C."/>
        </authorList>
    </citation>
    <scope>NUCLEOTIDE SEQUENCE [LARGE SCALE GENOMIC DNA]</scope>
    <source>
        <strain>9-941</strain>
    </source>
</reference>
<evidence type="ECO:0000255" key="1">
    <source>
        <dbReference type="HAMAP-Rule" id="MF_00128"/>
    </source>
</evidence>